<evidence type="ECO:0000255" key="1">
    <source>
        <dbReference type="HAMAP-Rule" id="MF_04082"/>
    </source>
</evidence>
<accession>P05947</accession>
<accession>O90293</accession>
<keyword id="KW-0014">AIDS</keyword>
<keyword id="KW-0053">Apoptosis</keyword>
<keyword id="KW-1043">Host membrane</keyword>
<keyword id="KW-0945">Host-virus interaction</keyword>
<keyword id="KW-1090">Inhibition of host innate immune response by virus</keyword>
<keyword id="KW-1084">Inhibition of host tetherin by virus</keyword>
<keyword id="KW-0407">Ion channel</keyword>
<keyword id="KW-0406">Ion transport</keyword>
<keyword id="KW-0472">Membrane</keyword>
<keyword id="KW-0597">Phosphoprotein</keyword>
<keyword id="KW-1185">Reference proteome</keyword>
<keyword id="KW-0812">Transmembrane</keyword>
<keyword id="KW-1133">Transmembrane helix</keyword>
<keyword id="KW-0813">Transport</keyword>
<keyword id="KW-0899">Viral immunoevasion</keyword>
<protein>
    <recommendedName>
        <fullName evidence="1">Protein Vpu</fullName>
    </recommendedName>
    <alternativeName>
        <fullName evidence="1">U ORF protein</fullName>
    </alternativeName>
    <alternativeName>
        <fullName evidence="1">Viral protein U</fullName>
    </alternativeName>
</protein>
<organismHost>
    <name type="scientific">Homo sapiens</name>
    <name type="common">Human</name>
    <dbReference type="NCBI Taxonomy" id="9606"/>
</organismHost>
<organism>
    <name type="scientific">Human immunodeficiency virus type 1 group M subtype B (isolate MN)</name>
    <name type="common">HIV-1</name>
    <dbReference type="NCBI Taxonomy" id="11696"/>
    <lineage>
        <taxon>Viruses</taxon>
        <taxon>Riboviria</taxon>
        <taxon>Pararnavirae</taxon>
        <taxon>Artverviricota</taxon>
        <taxon>Revtraviricetes</taxon>
        <taxon>Ortervirales</taxon>
        <taxon>Retroviridae</taxon>
        <taxon>Orthoretrovirinae</taxon>
        <taxon>Lentivirus</taxon>
        <taxon>Human immunodeficiency virus type 1</taxon>
    </lineage>
</organism>
<feature type="chain" id="PRO_0000085426" description="Protein Vpu">
    <location>
        <begin position="1"/>
        <end position="81"/>
    </location>
</feature>
<feature type="topological domain" description="Extracellular" evidence="1">
    <location>
        <begin position="1"/>
        <end position="7"/>
    </location>
</feature>
<feature type="transmembrane region" description="Helical" evidence="1">
    <location>
        <begin position="8"/>
        <end position="28"/>
    </location>
</feature>
<feature type="topological domain" description="Cytoplasmic" evidence="1">
    <location>
        <begin position="29"/>
        <end position="81"/>
    </location>
</feature>
<feature type="modified residue" description="Phosphoserine; by host CK2" evidence="1">
    <location>
        <position position="53"/>
    </location>
</feature>
<feature type="modified residue" description="Phosphoserine; by host CK2" evidence="1">
    <location>
        <position position="57"/>
    </location>
</feature>
<proteinExistence type="inferred from homology"/>
<dbReference type="EMBL" id="M17449">
    <property type="protein sequence ID" value="AAA44856.1"/>
    <property type="status" value="ALT_FRAME"/>
    <property type="molecule type" value="Genomic_RNA"/>
</dbReference>
<dbReference type="EMBL" id="AF075719">
    <property type="protein sequence ID" value="AAC33787.1"/>
    <property type="molecule type" value="Genomic_DNA"/>
</dbReference>
<dbReference type="Proteomes" id="UP000007697">
    <property type="component" value="Genome"/>
</dbReference>
<dbReference type="GO" id="GO:0033644">
    <property type="term" value="C:host cell membrane"/>
    <property type="evidence" value="ECO:0007669"/>
    <property type="project" value="UniProtKB-SubCell"/>
</dbReference>
<dbReference type="GO" id="GO:0016020">
    <property type="term" value="C:membrane"/>
    <property type="evidence" value="ECO:0007669"/>
    <property type="project" value="UniProtKB-UniRule"/>
</dbReference>
<dbReference type="GO" id="GO:0042609">
    <property type="term" value="F:CD4 receptor binding"/>
    <property type="evidence" value="ECO:0007669"/>
    <property type="project" value="UniProtKB-UniRule"/>
</dbReference>
<dbReference type="GO" id="GO:0005261">
    <property type="term" value="F:monoatomic cation channel activity"/>
    <property type="evidence" value="ECO:0007669"/>
    <property type="project" value="UniProtKB-UniRule"/>
</dbReference>
<dbReference type="GO" id="GO:0032801">
    <property type="term" value="P:receptor catabolic process"/>
    <property type="evidence" value="ECO:0007669"/>
    <property type="project" value="UniProtKB-UniRule"/>
</dbReference>
<dbReference type="GO" id="GO:0052170">
    <property type="term" value="P:symbiont-mediated suppression of host innate immune response"/>
    <property type="evidence" value="ECO:0007669"/>
    <property type="project" value="UniProtKB-KW"/>
</dbReference>
<dbReference type="GO" id="GO:0039502">
    <property type="term" value="P:symbiont-mediated suppression of host type I interferon-mediated signaling pathway"/>
    <property type="evidence" value="ECO:0007669"/>
    <property type="project" value="UniProtKB-UniRule"/>
</dbReference>
<dbReference type="GO" id="GO:0039587">
    <property type="term" value="P:symbiont-mediated-mediated suppression of host tetherin activity"/>
    <property type="evidence" value="ECO:0007669"/>
    <property type="project" value="UniProtKB-UniRule"/>
</dbReference>
<dbReference type="GO" id="GO:0019076">
    <property type="term" value="P:viral release from host cell"/>
    <property type="evidence" value="ECO:0007669"/>
    <property type="project" value="UniProtKB-UniRule"/>
</dbReference>
<dbReference type="Gene3D" id="1.10.195.10">
    <property type="entry name" value="HIV-1 VPU cytoplasmic domain"/>
    <property type="match status" value="1"/>
</dbReference>
<dbReference type="HAMAP" id="MF_04082">
    <property type="entry name" value="HIV_VPU"/>
    <property type="match status" value="1"/>
</dbReference>
<dbReference type="InterPro" id="IPR008187">
    <property type="entry name" value="Vpu"/>
</dbReference>
<dbReference type="InterPro" id="IPR009032">
    <property type="entry name" value="Vpu_cyt_dom_sf"/>
</dbReference>
<dbReference type="Pfam" id="PF00558">
    <property type="entry name" value="Vpu"/>
    <property type="match status" value="1"/>
</dbReference>
<dbReference type="SUPFAM" id="SSF57647">
    <property type="entry name" value="HIV-1 VPU cytoplasmic domain"/>
    <property type="match status" value="1"/>
</dbReference>
<name>VPU_HV1MN</name>
<gene>
    <name evidence="1" type="primary">vpu</name>
</gene>
<reference key="1">
    <citation type="journal article" date="1988" name="Virology">
        <title>Envelope sequences of two new United States HIV-1 isolates.</title>
        <authorList>
            <person name="Gurgo C."/>
            <person name="Guo H.-G."/>
            <person name="Franchini G."/>
            <person name="Aldovini A."/>
            <person name="Collalti E."/>
            <person name="Farrell K."/>
            <person name="Wong-Staal F."/>
            <person name="Gallo R.C."/>
            <person name="Reitz M.S. Jr."/>
        </authorList>
    </citation>
    <scope>NUCLEOTIDE SEQUENCE [GENOMIC RNA]</scope>
</reference>
<reference key="2">
    <citation type="journal article" date="1998" name="J. Virol.">
        <title>Mutations in both gp120 and gp41 are responsible for the broad neutralization resistance of variant human immunodeficiency virus type 1 MN to antibodies directed at V3 and non-V3 epitopes.</title>
        <authorList>
            <person name="Park E.J."/>
            <person name="Vujcic L.K."/>
            <person name="Anand R."/>
            <person name="Theodore T.S."/>
            <person name="Quinnan G.V. Jr."/>
        </authorList>
    </citation>
    <scope>NUCLEOTIDE SEQUENCE [GENOMIC RNA]</scope>
</reference>
<sequence length="81" mass="9041">MQPLVIAAIVALVVAGIIAIVVWSIVFIEYRKIRRQRKIDKLIDRISERAEDSGNESEGDQEELSALVGMGHDAPWVINDL</sequence>
<comment type="function">
    <text evidence="1">Enhances virion budding by targeting host CD4 and Tetherin/BST2 to proteasome degradation. Degradation of CD4 prevents any unwanted premature interactions between viral Env and its host receptor CD4 in the endoplasmic reticulum. Degradation of antiretroviral protein Tetherin/BST2 is important for virion budding, as BST2 tethers new viral particles to the host cell membrane. Mechanistically, Vpu bridges either CD4 or BST2 to BTRC, a substrate recognition subunit of the Skp1/Cullin/F-box protein E3 ubiquitin ligase, induces their ubiquitination and subsequent proteasomal degradation. The alteration of the E3 ligase specificity by Vpu seems to promote the degradation of host IKBKB, leading to NF-kappa-B down-regulation and subsequent apoptosis. Acts as a viroporin that forms an oligomeric ion channel in membranes. Modulates the host DNA repair mechanisms to promote degradation of nuclear viral cDNA in cells that are already productively infected in order to suppress immune sensing and proviral hyper-integration (superinfection). Manipulates PML-NBs and modulates SUMOylation of host BLM protein thereby enhancing its DNA-end processing activity toward viral unintegrated linear DNA. Also inhibits RAD52-mediated homologous repair of viral cDNA, preventing the generation of dead-end circular forms of single copies of the long terminal repeat and permitting sustained nucleolytic attack.</text>
</comment>
<comment type="activity regulation">
    <text evidence="1">Ion channel activity is inhibited by hexamethylene amiloride in vitro.</text>
</comment>
<comment type="subunit">
    <text evidence="1">Homopentamer. Interacts with host CD4 and BRTC; these interactions induce proteasomal degradation of CD4. Interacts with host BST2; this interaction leads to the degradation of host BST2. Interacts with host FBXW11. Interacts with host AP1M1; this interaction plays a role in the mistrafficking and subsequent degradation of host BST2. Interacts with host RANBP2; this interaction allows Vpu to down-regulate host BLM sumoylation.</text>
</comment>
<comment type="subcellular location">
    <subcellularLocation>
        <location evidence="1">Host membrane</location>
        <topology evidence="1">Single-pass type I membrane protein</topology>
    </subcellularLocation>
</comment>
<comment type="domain">
    <text evidence="1">The N-terminus and transmembrane domains are required for self-oligomerization and proper virion budding, whereas the cytoplasmic domain is required for CD4 degradation. The cytoplasmic domain is composed of 2 amphipathic alpha helix that form a U-shape.</text>
</comment>
<comment type="PTM">
    <text evidence="1">Phosphorylated by host CK2. This phosphorylation is necessary for interaction with human BTRC and degradation of CD4.</text>
</comment>
<comment type="miscellaneous">
    <text evidence="1">HIV-1 lineages are divided in three main groups, M (for Major), O (for Outlier), and N (for New, or Non-M, Non-O). The vast majority of strains found worldwide belong to the group M. Group O seems to be endemic to and largely confined to Cameroon and neighboring countries in West Central Africa, where these viruses represent a small minority of HIV-1 strains. The group N is represented by a limited number of isolates from Cameroonian persons. The group M is further subdivided in 9 clades or subtypes (A to D, F to H, J and K).</text>
</comment>
<comment type="similarity">
    <text evidence="1">Belongs to the HIV-1 VPU protein family.</text>
</comment>
<comment type="sequence caution">
    <conflict type="frameshift">
        <sequence resource="EMBL-CDS" id="AAA44856"/>
    </conflict>
</comment>